<keyword id="KW-0025">Alternative splicing</keyword>
<keyword id="KW-0131">Cell cycle</keyword>
<keyword id="KW-0132">Cell division</keyword>
<keyword id="KW-0963">Cytoplasm</keyword>
<keyword id="KW-0650">Protein phosphatase inhibitor</keyword>
<keyword id="KW-1185">Reference proteome</keyword>
<organism>
    <name type="scientific">Mus musculus</name>
    <name type="common">Mouse</name>
    <dbReference type="NCBI Taxonomy" id="10090"/>
    <lineage>
        <taxon>Eukaryota</taxon>
        <taxon>Metazoa</taxon>
        <taxon>Chordata</taxon>
        <taxon>Craniata</taxon>
        <taxon>Vertebrata</taxon>
        <taxon>Euteleostomi</taxon>
        <taxon>Mammalia</taxon>
        <taxon>Eutheria</taxon>
        <taxon>Euarchontoglires</taxon>
        <taxon>Glires</taxon>
        <taxon>Rodentia</taxon>
        <taxon>Myomorpha</taxon>
        <taxon>Muroidea</taxon>
        <taxon>Muridae</taxon>
        <taxon>Murinae</taxon>
        <taxon>Mus</taxon>
        <taxon>Mus</taxon>
    </lineage>
</organism>
<reference key="1">
    <citation type="journal article" date="2005" name="Science">
        <title>The transcriptional landscape of the mammalian genome.</title>
        <authorList>
            <person name="Carninci P."/>
            <person name="Kasukawa T."/>
            <person name="Katayama S."/>
            <person name="Gough J."/>
            <person name="Frith M.C."/>
            <person name="Maeda N."/>
            <person name="Oyama R."/>
            <person name="Ravasi T."/>
            <person name="Lenhard B."/>
            <person name="Wells C."/>
            <person name="Kodzius R."/>
            <person name="Shimokawa K."/>
            <person name="Bajic V.B."/>
            <person name="Brenner S.E."/>
            <person name="Batalov S."/>
            <person name="Forrest A.R."/>
            <person name="Zavolan M."/>
            <person name="Davis M.J."/>
            <person name="Wilming L.G."/>
            <person name="Aidinis V."/>
            <person name="Allen J.E."/>
            <person name="Ambesi-Impiombato A."/>
            <person name="Apweiler R."/>
            <person name="Aturaliya R.N."/>
            <person name="Bailey T.L."/>
            <person name="Bansal M."/>
            <person name="Baxter L."/>
            <person name="Beisel K.W."/>
            <person name="Bersano T."/>
            <person name="Bono H."/>
            <person name="Chalk A.M."/>
            <person name="Chiu K.P."/>
            <person name="Choudhary V."/>
            <person name="Christoffels A."/>
            <person name="Clutterbuck D.R."/>
            <person name="Crowe M.L."/>
            <person name="Dalla E."/>
            <person name="Dalrymple B.P."/>
            <person name="de Bono B."/>
            <person name="Della Gatta G."/>
            <person name="di Bernardo D."/>
            <person name="Down T."/>
            <person name="Engstrom P."/>
            <person name="Fagiolini M."/>
            <person name="Faulkner G."/>
            <person name="Fletcher C.F."/>
            <person name="Fukushima T."/>
            <person name="Furuno M."/>
            <person name="Futaki S."/>
            <person name="Gariboldi M."/>
            <person name="Georgii-Hemming P."/>
            <person name="Gingeras T.R."/>
            <person name="Gojobori T."/>
            <person name="Green R.E."/>
            <person name="Gustincich S."/>
            <person name="Harbers M."/>
            <person name="Hayashi Y."/>
            <person name="Hensch T.K."/>
            <person name="Hirokawa N."/>
            <person name="Hill D."/>
            <person name="Huminiecki L."/>
            <person name="Iacono M."/>
            <person name="Ikeo K."/>
            <person name="Iwama A."/>
            <person name="Ishikawa T."/>
            <person name="Jakt M."/>
            <person name="Kanapin A."/>
            <person name="Katoh M."/>
            <person name="Kawasawa Y."/>
            <person name="Kelso J."/>
            <person name="Kitamura H."/>
            <person name="Kitano H."/>
            <person name="Kollias G."/>
            <person name="Krishnan S.P."/>
            <person name="Kruger A."/>
            <person name="Kummerfeld S.K."/>
            <person name="Kurochkin I.V."/>
            <person name="Lareau L.F."/>
            <person name="Lazarevic D."/>
            <person name="Lipovich L."/>
            <person name="Liu J."/>
            <person name="Liuni S."/>
            <person name="McWilliam S."/>
            <person name="Madan Babu M."/>
            <person name="Madera M."/>
            <person name="Marchionni L."/>
            <person name="Matsuda H."/>
            <person name="Matsuzawa S."/>
            <person name="Miki H."/>
            <person name="Mignone F."/>
            <person name="Miyake S."/>
            <person name="Morris K."/>
            <person name="Mottagui-Tabar S."/>
            <person name="Mulder N."/>
            <person name="Nakano N."/>
            <person name="Nakauchi H."/>
            <person name="Ng P."/>
            <person name="Nilsson R."/>
            <person name="Nishiguchi S."/>
            <person name="Nishikawa S."/>
            <person name="Nori F."/>
            <person name="Ohara O."/>
            <person name="Okazaki Y."/>
            <person name="Orlando V."/>
            <person name="Pang K.C."/>
            <person name="Pavan W.J."/>
            <person name="Pavesi G."/>
            <person name="Pesole G."/>
            <person name="Petrovsky N."/>
            <person name="Piazza S."/>
            <person name="Reed J."/>
            <person name="Reid J.F."/>
            <person name="Ring B.Z."/>
            <person name="Ringwald M."/>
            <person name="Rost B."/>
            <person name="Ruan Y."/>
            <person name="Salzberg S.L."/>
            <person name="Sandelin A."/>
            <person name="Schneider C."/>
            <person name="Schoenbach C."/>
            <person name="Sekiguchi K."/>
            <person name="Semple C.A."/>
            <person name="Seno S."/>
            <person name="Sessa L."/>
            <person name="Sheng Y."/>
            <person name="Shibata Y."/>
            <person name="Shimada H."/>
            <person name="Shimada K."/>
            <person name="Silva D."/>
            <person name="Sinclair B."/>
            <person name="Sperling S."/>
            <person name="Stupka E."/>
            <person name="Sugiura K."/>
            <person name="Sultana R."/>
            <person name="Takenaka Y."/>
            <person name="Taki K."/>
            <person name="Tammoja K."/>
            <person name="Tan S.L."/>
            <person name="Tang S."/>
            <person name="Taylor M.S."/>
            <person name="Tegner J."/>
            <person name="Teichmann S.A."/>
            <person name="Ueda H.R."/>
            <person name="van Nimwegen E."/>
            <person name="Verardo R."/>
            <person name="Wei C.L."/>
            <person name="Yagi K."/>
            <person name="Yamanishi H."/>
            <person name="Zabarovsky E."/>
            <person name="Zhu S."/>
            <person name="Zimmer A."/>
            <person name="Hide W."/>
            <person name="Bult C."/>
            <person name="Grimmond S.M."/>
            <person name="Teasdale R.D."/>
            <person name="Liu E.T."/>
            <person name="Brusic V."/>
            <person name="Quackenbush J."/>
            <person name="Wahlestedt C."/>
            <person name="Mattick J.S."/>
            <person name="Hume D.A."/>
            <person name="Kai C."/>
            <person name="Sasaki D."/>
            <person name="Tomaru Y."/>
            <person name="Fukuda S."/>
            <person name="Kanamori-Katayama M."/>
            <person name="Suzuki M."/>
            <person name="Aoki J."/>
            <person name="Arakawa T."/>
            <person name="Iida J."/>
            <person name="Imamura K."/>
            <person name="Itoh M."/>
            <person name="Kato T."/>
            <person name="Kawaji H."/>
            <person name="Kawagashira N."/>
            <person name="Kawashima T."/>
            <person name="Kojima M."/>
            <person name="Kondo S."/>
            <person name="Konno H."/>
            <person name="Nakano K."/>
            <person name="Ninomiya N."/>
            <person name="Nishio T."/>
            <person name="Okada M."/>
            <person name="Plessy C."/>
            <person name="Shibata K."/>
            <person name="Shiraki T."/>
            <person name="Suzuki S."/>
            <person name="Tagami M."/>
            <person name="Waki K."/>
            <person name="Watahiki A."/>
            <person name="Okamura-Oho Y."/>
            <person name="Suzuki H."/>
            <person name="Kawai J."/>
            <person name="Hayashizaki Y."/>
        </authorList>
    </citation>
    <scope>NUCLEOTIDE SEQUENCE [LARGE SCALE MRNA] (ISOFORMS 1; 2 AND 3)</scope>
    <source>
        <strain>C57BL/6J</strain>
        <tissue>Inner ear</tissue>
        <tissue>Spinal ganglion</tissue>
    </source>
</reference>
<reference key="2">
    <citation type="journal article" date="2009" name="PLoS Biol.">
        <title>Lineage-specific biology revealed by a finished genome assembly of the mouse.</title>
        <authorList>
            <person name="Church D.M."/>
            <person name="Goodstadt L."/>
            <person name="Hillier L.W."/>
            <person name="Zody M.C."/>
            <person name="Goldstein S."/>
            <person name="She X."/>
            <person name="Bult C.J."/>
            <person name="Agarwala R."/>
            <person name="Cherry J.L."/>
            <person name="DiCuccio M."/>
            <person name="Hlavina W."/>
            <person name="Kapustin Y."/>
            <person name="Meric P."/>
            <person name="Maglott D."/>
            <person name="Birtle Z."/>
            <person name="Marques A.C."/>
            <person name="Graves T."/>
            <person name="Zhou S."/>
            <person name="Teague B."/>
            <person name="Potamousis K."/>
            <person name="Churas C."/>
            <person name="Place M."/>
            <person name="Herschleb J."/>
            <person name="Runnheim R."/>
            <person name="Forrest D."/>
            <person name="Amos-Landgraf J."/>
            <person name="Schwartz D.C."/>
            <person name="Cheng Z."/>
            <person name="Lindblad-Toh K."/>
            <person name="Eichler E.E."/>
            <person name="Ponting C.P."/>
        </authorList>
    </citation>
    <scope>NUCLEOTIDE SEQUENCE [LARGE SCALE GENOMIC DNA]</scope>
    <source>
        <strain>C57BL/6J</strain>
    </source>
</reference>
<reference key="3">
    <citation type="journal article" date="2004" name="Genome Res.">
        <title>The status, quality, and expansion of the NIH full-length cDNA project: the Mammalian Gene Collection (MGC).</title>
        <authorList>
            <consortium name="The MGC Project Team"/>
        </authorList>
    </citation>
    <scope>NUCLEOTIDE SEQUENCE [LARGE SCALE MRNA] (ISOFORM 2)</scope>
    <source>
        <tissue>Brain</tissue>
    </source>
</reference>
<dbReference type="EMBL" id="AK051449">
    <property type="protein sequence ID" value="BAC34644.1"/>
    <property type="molecule type" value="mRNA"/>
</dbReference>
<dbReference type="EMBL" id="AK051670">
    <property type="protein sequence ID" value="BAC34713.1"/>
    <property type="molecule type" value="mRNA"/>
</dbReference>
<dbReference type="EMBL" id="AK157871">
    <property type="protein sequence ID" value="BAE34243.1"/>
    <property type="molecule type" value="mRNA"/>
</dbReference>
<dbReference type="EMBL" id="AL844577">
    <property type="status" value="NOT_ANNOTATED_CDS"/>
    <property type="molecule type" value="Genomic_DNA"/>
</dbReference>
<dbReference type="EMBL" id="BC120706">
    <property type="protein sequence ID" value="AAI20707.1"/>
    <property type="molecule type" value="mRNA"/>
</dbReference>
<dbReference type="EMBL" id="BC132149">
    <property type="protein sequence ID" value="AAI32150.1"/>
    <property type="molecule type" value="mRNA"/>
</dbReference>
<dbReference type="CCDS" id="CCDS16171.1">
    <molecule id="Q8BKK4-1"/>
</dbReference>
<dbReference type="CCDS" id="CCDS71081.1">
    <molecule id="Q8BKK4-3"/>
</dbReference>
<dbReference type="CCDS" id="CCDS79810.1">
    <molecule id="Q8BKK4-2"/>
</dbReference>
<dbReference type="RefSeq" id="NP_001277672.1">
    <molecule id="Q8BKK4-3"/>
    <property type="nucleotide sequence ID" value="NM_001290743.1"/>
</dbReference>
<dbReference type="RefSeq" id="NP_001277673.1">
    <molecule id="Q8BKK4-2"/>
    <property type="nucleotide sequence ID" value="NM_001290744.1"/>
</dbReference>
<dbReference type="RefSeq" id="NP_766008.2">
    <molecule id="Q8BKK4-1"/>
    <property type="nucleotide sequence ID" value="NM_172420.4"/>
</dbReference>
<dbReference type="FunCoup" id="Q8BKK4">
    <property type="interactions" value="471"/>
</dbReference>
<dbReference type="STRING" id="10090.ENSMUSP00000088265"/>
<dbReference type="iPTMnet" id="Q8BKK4"/>
<dbReference type="PhosphoSitePlus" id="Q8BKK4"/>
<dbReference type="PaxDb" id="10090-ENSMUSP00000088265"/>
<dbReference type="ProteomicsDB" id="291722">
    <molecule id="Q8BKK4-1"/>
</dbReference>
<dbReference type="ProteomicsDB" id="291723">
    <molecule id="Q8BKK4-2"/>
</dbReference>
<dbReference type="ProteomicsDB" id="291724">
    <molecule id="Q8BKK4-3"/>
</dbReference>
<dbReference type="Antibodypedia" id="33985">
    <property type="antibodies" value="97 antibodies from 26 providers"/>
</dbReference>
<dbReference type="DNASU" id="75276"/>
<dbReference type="Ensembl" id="ENSMUST00000040863.11">
    <molecule id="Q8BKK4-2"/>
    <property type="protein sequence ID" value="ENSMUSP00000042784.5"/>
    <property type="gene ID" value="ENSMUSG00000034683.13"/>
</dbReference>
<dbReference type="Ensembl" id="ENSMUST00000090760.9">
    <molecule id="Q8BKK4-1"/>
    <property type="protein sequence ID" value="ENSMUSP00000088265.3"/>
    <property type="gene ID" value="ENSMUSG00000034683.13"/>
</dbReference>
<dbReference type="Ensembl" id="ENSMUST00000111780.3">
    <molecule id="Q8BKK4-3"/>
    <property type="protein sequence ID" value="ENSMUSP00000107410.3"/>
    <property type="gene ID" value="ENSMUSG00000034683.13"/>
</dbReference>
<dbReference type="GeneID" id="75276"/>
<dbReference type="KEGG" id="mmu:75276"/>
<dbReference type="UCSC" id="uc008kgy.2">
    <molecule id="Q8BKK4-1"/>
    <property type="organism name" value="mouse"/>
</dbReference>
<dbReference type="UCSC" id="uc008kha.1">
    <molecule id="Q8BKK4-3"/>
    <property type="organism name" value="mouse"/>
</dbReference>
<dbReference type="AGR" id="MGI:1923185"/>
<dbReference type="CTD" id="151242"/>
<dbReference type="MGI" id="MGI:1923185">
    <property type="gene designation" value="Ppp1r1c"/>
</dbReference>
<dbReference type="VEuPathDB" id="HostDB:ENSMUSG00000034683"/>
<dbReference type="eggNOG" id="ENOG502S35G">
    <property type="taxonomic scope" value="Eukaryota"/>
</dbReference>
<dbReference type="GeneTree" id="ENSGT00940000160192"/>
<dbReference type="HOGENOM" id="CLU_092269_4_0_1"/>
<dbReference type="InParanoid" id="Q8BKK4"/>
<dbReference type="OMA" id="VNEREDQ"/>
<dbReference type="OrthoDB" id="9940275at2759"/>
<dbReference type="PhylomeDB" id="Q8BKK4"/>
<dbReference type="TreeFam" id="TF332576"/>
<dbReference type="BioGRID-ORCS" id="75276">
    <property type="hits" value="1 hit in 79 CRISPR screens"/>
</dbReference>
<dbReference type="ChiTaRS" id="Ppp1r1c">
    <property type="organism name" value="mouse"/>
</dbReference>
<dbReference type="PRO" id="PR:Q8BKK4"/>
<dbReference type="Proteomes" id="UP000000589">
    <property type="component" value="Chromosome 2"/>
</dbReference>
<dbReference type="RNAct" id="Q8BKK4">
    <property type="molecule type" value="protein"/>
</dbReference>
<dbReference type="Bgee" id="ENSMUSG00000034683">
    <property type="expression patterns" value="Expressed in trigeminal ganglion and 42 other cell types or tissues"/>
</dbReference>
<dbReference type="GO" id="GO:0005737">
    <property type="term" value="C:cytoplasm"/>
    <property type="evidence" value="ECO:0007669"/>
    <property type="project" value="UniProtKB-SubCell"/>
</dbReference>
<dbReference type="GO" id="GO:0004864">
    <property type="term" value="F:protein phosphatase inhibitor activity"/>
    <property type="evidence" value="ECO:0007669"/>
    <property type="project" value="UniProtKB-KW"/>
</dbReference>
<dbReference type="GO" id="GO:0051301">
    <property type="term" value="P:cell division"/>
    <property type="evidence" value="ECO:0007669"/>
    <property type="project" value="UniProtKB-KW"/>
</dbReference>
<dbReference type="GO" id="GO:0007165">
    <property type="term" value="P:signal transduction"/>
    <property type="evidence" value="ECO:0007669"/>
    <property type="project" value="InterPro"/>
</dbReference>
<dbReference type="InterPro" id="IPR008466">
    <property type="entry name" value="PPP1R1A/B/C"/>
</dbReference>
<dbReference type="PANTHER" id="PTHR15417:SF5">
    <property type="entry name" value="PROTEIN PHOSPHATASE 1 REGULATORY SUBUNIT 1C"/>
    <property type="match status" value="1"/>
</dbReference>
<dbReference type="PANTHER" id="PTHR15417">
    <property type="entry name" value="PROTEIN PHOSPHATASE INHIBITOR AND DOPAMINE- AND CAMP-REGULATED NEURONAL PHOSPHOPROTEIN"/>
    <property type="match status" value="1"/>
</dbReference>
<dbReference type="Pfam" id="PF05395">
    <property type="entry name" value="DARPP-32"/>
    <property type="match status" value="1"/>
</dbReference>
<name>PPR1C_MOUSE</name>
<gene>
    <name type="primary">Ppp1r1c</name>
</gene>
<protein>
    <recommendedName>
        <fullName>Protein phosphatase 1 regulatory subunit 1C</fullName>
    </recommendedName>
</protein>
<proteinExistence type="inferred from homology"/>
<accession>Q8BKK4</accession>
<accession>A2AQD1</accession>
<accession>Q3TZG5</accession>
<accession>Q8BKM4</accession>
<sequence>MEPNSPKKIQFAVPLFQSQIAPEAAEQIRKRRPTPASLVILNEHNSPEIDEKRVTNTQESQNASPKQRKQSVYTPPAMKGVKHLKDQNGSAFPEEEESASEREEKWNH</sequence>
<feature type="chain" id="PRO_0000286444" description="Protein phosphatase 1 regulatory subunit 1C">
    <location>
        <begin position="1"/>
        <end position="108"/>
    </location>
</feature>
<feature type="region of interest" description="Disordered" evidence="3">
    <location>
        <begin position="25"/>
        <end position="108"/>
    </location>
</feature>
<feature type="compositionally biased region" description="Basic and acidic residues" evidence="3">
    <location>
        <begin position="45"/>
        <end position="54"/>
    </location>
</feature>
<feature type="compositionally biased region" description="Polar residues" evidence="3">
    <location>
        <begin position="55"/>
        <end position="73"/>
    </location>
</feature>
<feature type="compositionally biased region" description="Basic and acidic residues" evidence="3">
    <location>
        <begin position="99"/>
        <end position="108"/>
    </location>
</feature>
<feature type="splice variant" id="VSP_025059" description="In isoform 2." evidence="4 5">
    <location>
        <begin position="48"/>
        <end position="79"/>
    </location>
</feature>
<feature type="splice variant" id="VSP_025060" description="In isoform 3." evidence="5">
    <original>VKHLKDQNGSAFPEEEESASEREEKWNH</original>
    <variation>ASNQEEKKRWE</variation>
    <location>
        <begin position="81"/>
        <end position="108"/>
    </location>
</feature>
<feature type="sequence conflict" description="In Ref. 1; BAC34644." evidence="6" ref="1">
    <original>V</original>
    <variation>E</variation>
    <location>
        <position position="13"/>
    </location>
</feature>
<comment type="function">
    <text evidence="2">May increase cell susceptibility to TNF-induced apoptosis.</text>
</comment>
<comment type="subcellular location">
    <subcellularLocation>
        <location evidence="1">Cytoplasm</location>
    </subcellularLocation>
</comment>
<comment type="alternative products">
    <event type="alternative splicing"/>
    <isoform>
        <id>Q8BKK4-1</id>
        <name>1</name>
        <sequence type="displayed"/>
    </isoform>
    <isoform>
        <id>Q8BKK4-2</id>
        <name>2</name>
        <sequence type="described" ref="VSP_025059"/>
    </isoform>
    <isoform>
        <id>Q8BKK4-3</id>
        <name>3</name>
        <sequence type="described" ref="VSP_025060"/>
    </isoform>
</comment>
<comment type="similarity">
    <text evidence="6">Belongs to the protein phosphatase inhibitor 1 family.</text>
</comment>
<evidence type="ECO:0000250" key="1"/>
<evidence type="ECO:0000250" key="2">
    <source>
        <dbReference type="UniProtKB" id="Q8WVI7"/>
    </source>
</evidence>
<evidence type="ECO:0000256" key="3">
    <source>
        <dbReference type="SAM" id="MobiDB-lite"/>
    </source>
</evidence>
<evidence type="ECO:0000303" key="4">
    <source>
    </source>
</evidence>
<evidence type="ECO:0000303" key="5">
    <source>
    </source>
</evidence>
<evidence type="ECO:0000305" key="6"/>